<gene>
    <name evidence="1" type="primary">pdxS</name>
    <name type="ordered locus">TON_1890</name>
</gene>
<comment type="function">
    <text evidence="1">Catalyzes the formation of pyridoxal 5'-phosphate from ribose 5-phosphate (RBP), glyceraldehyde 3-phosphate (G3P) and ammonia. The ammonia is provided by the PdxT subunit. Can also use ribulose 5-phosphate and dihydroxyacetone phosphate as substrates, resulting from enzyme-catalyzed isomerization of RBP and G3P, respectively.</text>
</comment>
<comment type="catalytic activity">
    <reaction evidence="1">
        <text>aldehydo-D-ribose 5-phosphate + D-glyceraldehyde 3-phosphate + L-glutamine = pyridoxal 5'-phosphate + L-glutamate + phosphate + 3 H2O + H(+)</text>
        <dbReference type="Rhea" id="RHEA:31507"/>
        <dbReference type="ChEBI" id="CHEBI:15377"/>
        <dbReference type="ChEBI" id="CHEBI:15378"/>
        <dbReference type="ChEBI" id="CHEBI:29985"/>
        <dbReference type="ChEBI" id="CHEBI:43474"/>
        <dbReference type="ChEBI" id="CHEBI:58273"/>
        <dbReference type="ChEBI" id="CHEBI:58359"/>
        <dbReference type="ChEBI" id="CHEBI:59776"/>
        <dbReference type="ChEBI" id="CHEBI:597326"/>
        <dbReference type="EC" id="4.3.3.6"/>
    </reaction>
</comment>
<comment type="pathway">
    <text evidence="1">Cofactor biosynthesis; pyridoxal 5'-phosphate biosynthesis.</text>
</comment>
<comment type="subunit">
    <text evidence="1">In the presence of PdxT, forms a dodecamer of heterodimers.</text>
</comment>
<comment type="similarity">
    <text evidence="1">Belongs to the PdxS/SNZ family.</text>
</comment>
<sequence length="335" mass="36858">MGKLHVIEAKGTERLKRGFARMVKGGVIMDVTNAEQARIAEEAGAVSVMALHKVPADIRKAGGVARMAPIEKIQEIMDAVTIPVMAKVRIGHVAEARVLEALGVDMIDESEVLTPADPFFHIDKREFNVPFVCGARNLGEAVRRIWEGSAMIRTKGEAGTGNIVEAVRHVRLVADNIRLIQRMTDEQVYAVAEKFAEPYLRLARQIREISGLPEQILENEPVYGHYTYREIVDGLYKILLEIKKLGRLPVVNFAAGGVATPADAALMMQMGMDGVFVGSGIFKSSTPEKMARAIVEAVNHWDEPDVIAAISKEIGEPMKGLEIEELEVRLEERGV</sequence>
<dbReference type="EC" id="4.3.3.6" evidence="1"/>
<dbReference type="EMBL" id="CP000855">
    <property type="protein sequence ID" value="ACJ17381.1"/>
    <property type="molecule type" value="Genomic_DNA"/>
</dbReference>
<dbReference type="RefSeq" id="WP_012572853.1">
    <property type="nucleotide sequence ID" value="NC_011529.1"/>
</dbReference>
<dbReference type="SMR" id="B6YVQ7"/>
<dbReference type="STRING" id="523850.TON_1890"/>
<dbReference type="GeneID" id="7017562"/>
<dbReference type="KEGG" id="ton:TON_1890"/>
<dbReference type="PATRIC" id="fig|523850.10.peg.1904"/>
<dbReference type="eggNOG" id="arCOG04075">
    <property type="taxonomic scope" value="Archaea"/>
</dbReference>
<dbReference type="HOGENOM" id="CLU_055352_1_0_2"/>
<dbReference type="OrthoDB" id="6840at2157"/>
<dbReference type="UniPathway" id="UPA00245"/>
<dbReference type="Proteomes" id="UP000002727">
    <property type="component" value="Chromosome"/>
</dbReference>
<dbReference type="GO" id="GO:0036381">
    <property type="term" value="F:pyridoxal 5'-phosphate synthase (glutamine hydrolysing) activity"/>
    <property type="evidence" value="ECO:0007669"/>
    <property type="project" value="UniProtKB-UniRule"/>
</dbReference>
<dbReference type="GO" id="GO:0006520">
    <property type="term" value="P:amino acid metabolic process"/>
    <property type="evidence" value="ECO:0007669"/>
    <property type="project" value="TreeGrafter"/>
</dbReference>
<dbReference type="GO" id="GO:0042823">
    <property type="term" value="P:pyridoxal phosphate biosynthetic process"/>
    <property type="evidence" value="ECO:0007669"/>
    <property type="project" value="UniProtKB-UniRule"/>
</dbReference>
<dbReference type="GO" id="GO:0008615">
    <property type="term" value="P:pyridoxine biosynthetic process"/>
    <property type="evidence" value="ECO:0007669"/>
    <property type="project" value="TreeGrafter"/>
</dbReference>
<dbReference type="CDD" id="cd04727">
    <property type="entry name" value="pdxS"/>
    <property type="match status" value="1"/>
</dbReference>
<dbReference type="FunFam" id="3.20.20.70:FF:000406">
    <property type="entry name" value="Pyridoxal 5'-phosphate synthase subunit PdxS"/>
    <property type="match status" value="1"/>
</dbReference>
<dbReference type="Gene3D" id="3.20.20.70">
    <property type="entry name" value="Aldolase class I"/>
    <property type="match status" value="1"/>
</dbReference>
<dbReference type="HAMAP" id="MF_01824">
    <property type="entry name" value="PdxS"/>
    <property type="match status" value="1"/>
</dbReference>
<dbReference type="InterPro" id="IPR013785">
    <property type="entry name" value="Aldolase_TIM"/>
</dbReference>
<dbReference type="InterPro" id="IPR001852">
    <property type="entry name" value="PdxS/SNZ"/>
</dbReference>
<dbReference type="InterPro" id="IPR033755">
    <property type="entry name" value="PdxS/SNZ_N"/>
</dbReference>
<dbReference type="InterPro" id="IPR011060">
    <property type="entry name" value="RibuloseP-bd_barrel"/>
</dbReference>
<dbReference type="InterPro" id="IPR033983">
    <property type="entry name" value="Thiazole_synthase_ThiG"/>
</dbReference>
<dbReference type="NCBIfam" id="NF003215">
    <property type="entry name" value="PRK04180.1"/>
    <property type="match status" value="1"/>
</dbReference>
<dbReference type="NCBIfam" id="TIGR00343">
    <property type="entry name" value="pyridoxal 5'-phosphate synthase lyase subunit PdxS"/>
    <property type="match status" value="1"/>
</dbReference>
<dbReference type="PANTHER" id="PTHR31829">
    <property type="entry name" value="PYRIDOXAL 5'-PHOSPHATE SYNTHASE SUBUNIT SNZ1-RELATED"/>
    <property type="match status" value="1"/>
</dbReference>
<dbReference type="PANTHER" id="PTHR31829:SF0">
    <property type="entry name" value="PYRIDOXAL 5'-PHOSPHATE SYNTHASE SUBUNIT SNZ1-RELATED"/>
    <property type="match status" value="1"/>
</dbReference>
<dbReference type="Pfam" id="PF01680">
    <property type="entry name" value="SOR_SNZ"/>
    <property type="match status" value="1"/>
</dbReference>
<dbReference type="Pfam" id="PF05690">
    <property type="entry name" value="ThiG"/>
    <property type="match status" value="1"/>
</dbReference>
<dbReference type="PIRSF" id="PIRSF029271">
    <property type="entry name" value="Pdx1"/>
    <property type="match status" value="1"/>
</dbReference>
<dbReference type="SUPFAM" id="SSF51366">
    <property type="entry name" value="Ribulose-phoshate binding barrel"/>
    <property type="match status" value="1"/>
</dbReference>
<dbReference type="PROSITE" id="PS01235">
    <property type="entry name" value="PDXS_SNZ_1"/>
    <property type="match status" value="1"/>
</dbReference>
<dbReference type="PROSITE" id="PS51129">
    <property type="entry name" value="PDXS_SNZ_2"/>
    <property type="match status" value="1"/>
</dbReference>
<evidence type="ECO:0000255" key="1">
    <source>
        <dbReference type="HAMAP-Rule" id="MF_01824"/>
    </source>
</evidence>
<organism>
    <name type="scientific">Thermococcus onnurineus (strain NA1)</name>
    <dbReference type="NCBI Taxonomy" id="523850"/>
    <lineage>
        <taxon>Archaea</taxon>
        <taxon>Methanobacteriati</taxon>
        <taxon>Methanobacteriota</taxon>
        <taxon>Thermococci</taxon>
        <taxon>Thermococcales</taxon>
        <taxon>Thermococcaceae</taxon>
        <taxon>Thermococcus</taxon>
    </lineage>
</organism>
<accession>B6YVQ7</accession>
<keyword id="KW-0456">Lyase</keyword>
<keyword id="KW-0663">Pyridoxal phosphate</keyword>
<keyword id="KW-0704">Schiff base</keyword>
<protein>
    <recommendedName>
        <fullName evidence="1">Pyridoxal 5'-phosphate synthase subunit PdxS</fullName>
        <shortName evidence="1">PLP synthase subunit PdxS</shortName>
        <ecNumber evidence="1">4.3.3.6</ecNumber>
    </recommendedName>
    <alternativeName>
        <fullName evidence="1">Pdx1</fullName>
    </alternativeName>
</protein>
<name>PDXS_THEON</name>
<reference key="1">
    <citation type="journal article" date="2008" name="J. Bacteriol.">
        <title>The complete genome sequence of Thermococcus onnurineus NA1 reveals a mixed heterotrophic and carboxydotrophic metabolism.</title>
        <authorList>
            <person name="Lee H.S."/>
            <person name="Kang S.G."/>
            <person name="Bae S.S."/>
            <person name="Lim J.K."/>
            <person name="Cho Y."/>
            <person name="Kim Y.J."/>
            <person name="Jeon J.H."/>
            <person name="Cha S.-S."/>
            <person name="Kwon K.K."/>
            <person name="Kim H.-T."/>
            <person name="Park C.-J."/>
            <person name="Lee H.-W."/>
            <person name="Kim S.I."/>
            <person name="Chun J."/>
            <person name="Colwell R.R."/>
            <person name="Kim S.-J."/>
            <person name="Lee J.-H."/>
        </authorList>
    </citation>
    <scope>NUCLEOTIDE SEQUENCE [LARGE SCALE GENOMIC DNA]</scope>
    <source>
        <strain>NA1</strain>
    </source>
</reference>
<feature type="chain" id="PRO_1000188247" description="Pyridoxal 5'-phosphate synthase subunit PdxS">
    <location>
        <begin position="1"/>
        <end position="335"/>
    </location>
</feature>
<feature type="active site" description="Schiff-base intermediate with D-ribose 5-phosphate" evidence="1">
    <location>
        <position position="87"/>
    </location>
</feature>
<feature type="binding site" evidence="1">
    <location>
        <position position="30"/>
    </location>
    <ligand>
        <name>D-ribose 5-phosphate</name>
        <dbReference type="ChEBI" id="CHEBI:78346"/>
    </ligand>
</feature>
<feature type="binding site" evidence="1">
    <location>
        <position position="159"/>
    </location>
    <ligand>
        <name>D-ribose 5-phosphate</name>
        <dbReference type="ChEBI" id="CHEBI:78346"/>
    </ligand>
</feature>
<feature type="binding site" evidence="1">
    <location>
        <position position="171"/>
    </location>
    <ligand>
        <name>D-glyceraldehyde 3-phosphate</name>
        <dbReference type="ChEBI" id="CHEBI:59776"/>
    </ligand>
</feature>
<feature type="binding site" evidence="1">
    <location>
        <position position="257"/>
    </location>
    <ligand>
        <name>D-ribose 5-phosphate</name>
        <dbReference type="ChEBI" id="CHEBI:78346"/>
    </ligand>
</feature>
<feature type="binding site" evidence="1">
    <location>
        <begin position="278"/>
        <end position="279"/>
    </location>
    <ligand>
        <name>D-ribose 5-phosphate</name>
        <dbReference type="ChEBI" id="CHEBI:78346"/>
    </ligand>
</feature>
<proteinExistence type="inferred from homology"/>